<name>RBL_PERAE</name>
<accession>P30830</accession>
<proteinExistence type="inferred from homology"/>
<organism>
    <name type="scientific">Persea americana</name>
    <name type="common">Avocado</name>
    <dbReference type="NCBI Taxonomy" id="3435"/>
    <lineage>
        <taxon>Eukaryota</taxon>
        <taxon>Viridiplantae</taxon>
        <taxon>Streptophyta</taxon>
        <taxon>Embryophyta</taxon>
        <taxon>Tracheophyta</taxon>
        <taxon>Spermatophyta</taxon>
        <taxon>Magnoliopsida</taxon>
        <taxon>Magnoliidae</taxon>
        <taxon>Laurales</taxon>
        <taxon>Lauraceae</taxon>
        <taxon>Persea</taxon>
    </lineage>
</organism>
<gene>
    <name evidence="1" type="primary">rbcL</name>
</gene>
<comment type="function">
    <text evidence="1">RuBisCO catalyzes two reactions: the carboxylation of D-ribulose 1,5-bisphosphate, the primary event in carbon dioxide fixation, as well as the oxidative fragmentation of the pentose substrate in the photorespiration process. Both reactions occur simultaneously and in competition at the same active site.</text>
</comment>
<comment type="catalytic activity">
    <reaction evidence="1">
        <text>2 (2R)-3-phosphoglycerate + 2 H(+) = D-ribulose 1,5-bisphosphate + CO2 + H2O</text>
        <dbReference type="Rhea" id="RHEA:23124"/>
        <dbReference type="ChEBI" id="CHEBI:15377"/>
        <dbReference type="ChEBI" id="CHEBI:15378"/>
        <dbReference type="ChEBI" id="CHEBI:16526"/>
        <dbReference type="ChEBI" id="CHEBI:57870"/>
        <dbReference type="ChEBI" id="CHEBI:58272"/>
        <dbReference type="EC" id="4.1.1.39"/>
    </reaction>
</comment>
<comment type="catalytic activity">
    <reaction evidence="1">
        <text>D-ribulose 1,5-bisphosphate + O2 = 2-phosphoglycolate + (2R)-3-phosphoglycerate + 2 H(+)</text>
        <dbReference type="Rhea" id="RHEA:36631"/>
        <dbReference type="ChEBI" id="CHEBI:15378"/>
        <dbReference type="ChEBI" id="CHEBI:15379"/>
        <dbReference type="ChEBI" id="CHEBI:57870"/>
        <dbReference type="ChEBI" id="CHEBI:58033"/>
        <dbReference type="ChEBI" id="CHEBI:58272"/>
    </reaction>
</comment>
<comment type="cofactor">
    <cofactor evidence="1">
        <name>Mg(2+)</name>
        <dbReference type="ChEBI" id="CHEBI:18420"/>
    </cofactor>
    <text evidence="1">Binds 1 Mg(2+) ion per subunit.</text>
</comment>
<comment type="subunit">
    <text evidence="1">Heterohexadecamer of 8 large chains and 8 small chains; disulfide-linked. The disulfide link is formed within the large subunit homodimers.</text>
</comment>
<comment type="subcellular location">
    <subcellularLocation>
        <location>Plastid</location>
        <location>Chloroplast</location>
    </subcellularLocation>
</comment>
<comment type="PTM">
    <text evidence="1">The disulfide bond which can form in the large chain dimeric partners within the hexadecamer appears to be associated with oxidative stress and protein turnover.</text>
</comment>
<comment type="miscellaneous">
    <text evidence="1">The basic functional RuBisCO is composed of a large chain homodimer in a 'head-to-tail' conformation. In form I RuBisCO this homodimer is arranged in a barrel-like tetramer with the small subunits forming a tetrameric 'cap' on each end of the 'barrel'.</text>
</comment>
<comment type="similarity">
    <text evidence="1">Belongs to the RuBisCO large chain family. Type I subfamily.</text>
</comment>
<evidence type="ECO:0000255" key="1">
    <source>
        <dbReference type="HAMAP-Rule" id="MF_01338"/>
    </source>
</evidence>
<sequence>MSPKTETKASVGFKAGVKDYKLTYYTPDYETKSTDILAAFRVTPQPGVPPEEAGAAVAAESSTGTWTTVWTDGLTSLDRYKGRCYHIEPVAGEESQFIAYVAYPLDLFEEGSVTNMFTSIVGNVFGFKALRALRLEDLRIPPAYSKTFQGPPHGIQVERDKLNKYGRPLLGCTIKPKLGLSAKNYGRAVYECLRGGLDFTKDDENVNSQPFMRWRDRFLFCAEAIYKSQAETGEIKGHYLNATAGTCEEMIKRAVFARELGVPIVMHDYLTGGFTANTTLAHYCRDNGLLLHIHRAMHAVIDRQKNHGMHFRVLAKALRMSGGDHIHAGTVVGKLEGERDITLGFVDLLRDDFIEKDRSRGIYFTQDWVSMPGVLPVASGGIHVWHMPALTEIFGDDSVLQFGGGTLGQPWGNAPRAVANRVALEACVQARNEGRDLAREGNEIIREASKWSPELAAACEVWKEIKFEFAEWIPCNQ</sequence>
<reference key="1">
    <citation type="journal article" date="1990" name="Nature">
        <title>Chloroplast DNA sequence from a miocene Magnolia species.</title>
        <authorList>
            <person name="Golenberg E.M."/>
            <person name="Giannasi D.E."/>
            <person name="Clegg M.T."/>
            <person name="Smiley C.J."/>
            <person name="Durbin M."/>
            <person name="Henderson D."/>
            <person name="Zurawski G."/>
        </authorList>
    </citation>
    <scope>NUCLEOTIDE SEQUENCE [GENOMIC DNA]</scope>
</reference>
<keyword id="KW-0007">Acetylation</keyword>
<keyword id="KW-0113">Calvin cycle</keyword>
<keyword id="KW-0120">Carbon dioxide fixation</keyword>
<keyword id="KW-0150">Chloroplast</keyword>
<keyword id="KW-1015">Disulfide bond</keyword>
<keyword id="KW-0456">Lyase</keyword>
<keyword id="KW-0460">Magnesium</keyword>
<keyword id="KW-0479">Metal-binding</keyword>
<keyword id="KW-0488">Methylation</keyword>
<keyword id="KW-0503">Monooxygenase</keyword>
<keyword id="KW-0560">Oxidoreductase</keyword>
<keyword id="KW-0601">Photorespiration</keyword>
<keyword id="KW-0602">Photosynthesis</keyword>
<keyword id="KW-0934">Plastid</keyword>
<dbReference type="EC" id="4.1.1.39" evidence="1"/>
<dbReference type="EMBL" id="L14620">
    <property type="protein sequence ID" value="AAB01596.1"/>
    <property type="molecule type" value="Genomic_DNA"/>
</dbReference>
<dbReference type="EMBL" id="X54347">
    <property type="protein sequence ID" value="CAA38235.1"/>
    <property type="molecule type" value="Genomic_DNA"/>
</dbReference>
<dbReference type="SMR" id="P30830"/>
<dbReference type="GO" id="GO:0009507">
    <property type="term" value="C:chloroplast"/>
    <property type="evidence" value="ECO:0007669"/>
    <property type="project" value="UniProtKB-SubCell"/>
</dbReference>
<dbReference type="GO" id="GO:0000287">
    <property type="term" value="F:magnesium ion binding"/>
    <property type="evidence" value="ECO:0007669"/>
    <property type="project" value="UniProtKB-UniRule"/>
</dbReference>
<dbReference type="GO" id="GO:0004497">
    <property type="term" value="F:monooxygenase activity"/>
    <property type="evidence" value="ECO:0007669"/>
    <property type="project" value="UniProtKB-KW"/>
</dbReference>
<dbReference type="GO" id="GO:0016984">
    <property type="term" value="F:ribulose-bisphosphate carboxylase activity"/>
    <property type="evidence" value="ECO:0007669"/>
    <property type="project" value="UniProtKB-UniRule"/>
</dbReference>
<dbReference type="GO" id="GO:0009853">
    <property type="term" value="P:photorespiration"/>
    <property type="evidence" value="ECO:0007669"/>
    <property type="project" value="UniProtKB-KW"/>
</dbReference>
<dbReference type="GO" id="GO:0019253">
    <property type="term" value="P:reductive pentose-phosphate cycle"/>
    <property type="evidence" value="ECO:0007669"/>
    <property type="project" value="UniProtKB-UniRule"/>
</dbReference>
<dbReference type="CDD" id="cd08212">
    <property type="entry name" value="RuBisCO_large_I"/>
    <property type="match status" value="1"/>
</dbReference>
<dbReference type="FunFam" id="3.20.20.110:FF:000001">
    <property type="entry name" value="Ribulose bisphosphate carboxylase large chain"/>
    <property type="match status" value="1"/>
</dbReference>
<dbReference type="FunFam" id="3.30.70.150:FF:000001">
    <property type="entry name" value="Ribulose bisphosphate carboxylase large chain"/>
    <property type="match status" value="1"/>
</dbReference>
<dbReference type="Gene3D" id="3.20.20.110">
    <property type="entry name" value="Ribulose bisphosphate carboxylase, large subunit, C-terminal domain"/>
    <property type="match status" value="1"/>
</dbReference>
<dbReference type="Gene3D" id="3.30.70.150">
    <property type="entry name" value="RuBisCO large subunit, N-terminal domain"/>
    <property type="match status" value="1"/>
</dbReference>
<dbReference type="HAMAP" id="MF_01338">
    <property type="entry name" value="RuBisCO_L_type1"/>
    <property type="match status" value="1"/>
</dbReference>
<dbReference type="InterPro" id="IPR033966">
    <property type="entry name" value="RuBisCO"/>
</dbReference>
<dbReference type="InterPro" id="IPR020878">
    <property type="entry name" value="RuBisCo_large_chain_AS"/>
</dbReference>
<dbReference type="InterPro" id="IPR000685">
    <property type="entry name" value="RuBisCO_lsu_C"/>
</dbReference>
<dbReference type="InterPro" id="IPR036376">
    <property type="entry name" value="RuBisCO_lsu_C_sf"/>
</dbReference>
<dbReference type="InterPro" id="IPR017443">
    <property type="entry name" value="RuBisCO_lsu_fd_N"/>
</dbReference>
<dbReference type="InterPro" id="IPR036422">
    <property type="entry name" value="RuBisCO_lsu_N_sf"/>
</dbReference>
<dbReference type="InterPro" id="IPR020888">
    <property type="entry name" value="RuBisCO_lsuI"/>
</dbReference>
<dbReference type="NCBIfam" id="NF003252">
    <property type="entry name" value="PRK04208.1"/>
    <property type="match status" value="1"/>
</dbReference>
<dbReference type="PANTHER" id="PTHR42704">
    <property type="entry name" value="RIBULOSE BISPHOSPHATE CARBOXYLASE"/>
    <property type="match status" value="1"/>
</dbReference>
<dbReference type="PANTHER" id="PTHR42704:SF15">
    <property type="entry name" value="RIBULOSE BISPHOSPHATE CARBOXYLASE LARGE CHAIN"/>
    <property type="match status" value="1"/>
</dbReference>
<dbReference type="Pfam" id="PF00016">
    <property type="entry name" value="RuBisCO_large"/>
    <property type="match status" value="1"/>
</dbReference>
<dbReference type="Pfam" id="PF02788">
    <property type="entry name" value="RuBisCO_large_N"/>
    <property type="match status" value="1"/>
</dbReference>
<dbReference type="SFLD" id="SFLDG01052">
    <property type="entry name" value="RuBisCO"/>
    <property type="match status" value="1"/>
</dbReference>
<dbReference type="SFLD" id="SFLDS00014">
    <property type="entry name" value="RuBisCO"/>
    <property type="match status" value="1"/>
</dbReference>
<dbReference type="SFLD" id="SFLDG00301">
    <property type="entry name" value="RuBisCO-like_proteins"/>
    <property type="match status" value="1"/>
</dbReference>
<dbReference type="SUPFAM" id="SSF51649">
    <property type="entry name" value="RuBisCo, C-terminal domain"/>
    <property type="match status" value="1"/>
</dbReference>
<dbReference type="SUPFAM" id="SSF54966">
    <property type="entry name" value="RuBisCO, large subunit, small (N-terminal) domain"/>
    <property type="match status" value="1"/>
</dbReference>
<dbReference type="PROSITE" id="PS00157">
    <property type="entry name" value="RUBISCO_LARGE"/>
    <property type="match status" value="1"/>
</dbReference>
<protein>
    <recommendedName>
        <fullName evidence="1">Ribulose bisphosphate carboxylase large chain</fullName>
        <shortName evidence="1">RuBisCO large subunit</shortName>
        <ecNumber evidence="1">4.1.1.39</ecNumber>
    </recommendedName>
</protein>
<feature type="propeptide" id="PRO_0000031335" evidence="1">
    <location>
        <begin position="1"/>
        <end position="2"/>
    </location>
</feature>
<feature type="chain" id="PRO_0000031336" description="Ribulose bisphosphate carboxylase large chain">
    <location>
        <begin position="3"/>
        <end position="477"/>
    </location>
</feature>
<feature type="active site" description="Proton acceptor" evidence="1">
    <location>
        <position position="175"/>
    </location>
</feature>
<feature type="active site" description="Proton acceptor" evidence="1">
    <location>
        <position position="294"/>
    </location>
</feature>
<feature type="binding site" description="in homodimeric partner" evidence="1">
    <location>
        <position position="123"/>
    </location>
    <ligand>
        <name>substrate</name>
    </ligand>
</feature>
<feature type="binding site" evidence="1">
    <location>
        <position position="173"/>
    </location>
    <ligand>
        <name>substrate</name>
    </ligand>
</feature>
<feature type="binding site" evidence="1">
    <location>
        <position position="177"/>
    </location>
    <ligand>
        <name>substrate</name>
    </ligand>
</feature>
<feature type="binding site" description="via carbamate group" evidence="1">
    <location>
        <position position="201"/>
    </location>
    <ligand>
        <name>Mg(2+)</name>
        <dbReference type="ChEBI" id="CHEBI:18420"/>
    </ligand>
</feature>
<feature type="binding site" evidence="1">
    <location>
        <position position="203"/>
    </location>
    <ligand>
        <name>Mg(2+)</name>
        <dbReference type="ChEBI" id="CHEBI:18420"/>
    </ligand>
</feature>
<feature type="binding site" evidence="1">
    <location>
        <position position="204"/>
    </location>
    <ligand>
        <name>Mg(2+)</name>
        <dbReference type="ChEBI" id="CHEBI:18420"/>
    </ligand>
</feature>
<feature type="binding site" evidence="1">
    <location>
        <position position="295"/>
    </location>
    <ligand>
        <name>substrate</name>
    </ligand>
</feature>
<feature type="binding site" evidence="1">
    <location>
        <position position="327"/>
    </location>
    <ligand>
        <name>substrate</name>
    </ligand>
</feature>
<feature type="binding site" evidence="1">
    <location>
        <position position="379"/>
    </location>
    <ligand>
        <name>substrate</name>
    </ligand>
</feature>
<feature type="site" description="Transition state stabilizer" evidence="1">
    <location>
        <position position="334"/>
    </location>
</feature>
<feature type="modified residue" description="N-acetylproline" evidence="1">
    <location>
        <position position="3"/>
    </location>
</feature>
<feature type="modified residue" description="N6,N6,N6-trimethyllysine" evidence="1">
    <location>
        <position position="14"/>
    </location>
</feature>
<feature type="modified residue" description="N6-carboxylysine" evidence="1">
    <location>
        <position position="201"/>
    </location>
</feature>
<feature type="disulfide bond" description="Interchain; in linked form" evidence="1">
    <location>
        <position position="247"/>
    </location>
</feature>
<geneLocation type="chloroplast"/>